<feature type="chain" id="PRO_0000379014" description="FHIP family protein GK23746">
    <location>
        <begin position="1"/>
        <end position="1097"/>
    </location>
</feature>
<feature type="region of interest" description="Disordered" evidence="2">
    <location>
        <begin position="1"/>
        <end position="25"/>
    </location>
</feature>
<feature type="region of interest" description="Disordered" evidence="2">
    <location>
        <begin position="639"/>
        <end position="684"/>
    </location>
</feature>
<feature type="region of interest" description="Disordered" evidence="2">
    <location>
        <begin position="820"/>
        <end position="856"/>
    </location>
</feature>
<feature type="region of interest" description="Disordered" evidence="2">
    <location>
        <begin position="932"/>
        <end position="1042"/>
    </location>
</feature>
<feature type="compositionally biased region" description="Polar residues" evidence="2">
    <location>
        <begin position="1"/>
        <end position="21"/>
    </location>
</feature>
<feature type="compositionally biased region" description="Low complexity" evidence="2">
    <location>
        <begin position="641"/>
        <end position="654"/>
    </location>
</feature>
<feature type="compositionally biased region" description="Low complexity" evidence="2">
    <location>
        <begin position="824"/>
        <end position="852"/>
    </location>
</feature>
<feature type="compositionally biased region" description="Low complexity" evidence="2">
    <location>
        <begin position="932"/>
        <end position="948"/>
    </location>
</feature>
<feature type="compositionally biased region" description="Polar residues" evidence="2">
    <location>
        <begin position="949"/>
        <end position="962"/>
    </location>
</feature>
<feature type="compositionally biased region" description="Low complexity" evidence="2">
    <location>
        <begin position="973"/>
        <end position="985"/>
    </location>
</feature>
<feature type="compositionally biased region" description="Gly residues" evidence="2">
    <location>
        <begin position="986"/>
        <end position="995"/>
    </location>
</feature>
<feature type="compositionally biased region" description="Low complexity" evidence="2">
    <location>
        <begin position="996"/>
        <end position="1006"/>
    </location>
</feature>
<feature type="compositionally biased region" description="Low complexity" evidence="2">
    <location>
        <begin position="1013"/>
        <end position="1022"/>
    </location>
</feature>
<feature type="modified residue" description="Phosphoserine" evidence="1">
    <location>
        <position position="491"/>
    </location>
</feature>
<feature type="modified residue" description="Phosphoserine" evidence="1">
    <location>
        <position position="823"/>
    </location>
</feature>
<evidence type="ECO:0000250" key="1"/>
<evidence type="ECO:0000256" key="2">
    <source>
        <dbReference type="SAM" id="MobiDB-lite"/>
    </source>
</evidence>
<evidence type="ECO:0000305" key="3"/>
<accession>B4MTY2</accession>
<gene>
    <name type="ORF">GK23746</name>
</gene>
<name>U518_DROWI</name>
<proteinExistence type="inferred from homology"/>
<protein>
    <recommendedName>
        <fullName>FHIP family protein GK23746</fullName>
    </recommendedName>
</protein>
<comment type="similarity">
    <text evidence="3">Belongs to the FHIP family.</text>
</comment>
<keyword id="KW-0597">Phosphoprotein</keyword>
<keyword id="KW-1185">Reference proteome</keyword>
<sequence length="1097" mass="120109">MSWLRSSPLRQSLTRTTSSGNGIRPIDAATDCDPRACYDSFCKHWQQAYDIIQHSSAPAPTHDDVLGVVSHLDYMVTLLLVELHNCNKISLADSNAPPTAPCLEYLLSENLLDKLYEWAATTGRYANAVRLEQLKLYELLVSHSRHQLLCHEPFLRPLLKILASSQGEIFPPDLEKRLVILLNQLCVVLMQNVHLLDLFFFSAQTQVQEQIQNGNVPPPKSGTTTNFIIFSLLIPYVHREGSIGHQARDALLLCMALSQKNSNIGTYIAQYSSICPLLVTGLGGLYSRLPNSIEINSIDWHRITPDDVTEIPELNLFMNALEFCNAVVQVAHEMIKQQLLDFMYQGFIVPVLGPAILQTNIDSQISAMSYLDLILRSITEPGLLRAFVKFLLDTEKFDGERILDALVERLNSPDGNLCMVTMALFDTLLGLHCEDLMLELMLKYMLPGKHVPISHRHKINKIDPYLNSTEFFLELTPDVMKRARDLARPKSVNEHQQESALPNELSLPSLPSPVMSKTIGANWNYYGLHTGDSLYANLQAYLFEAHWRIAQCQRDCLKWANSYRYQKWPRQGQPQNRLHNHALELAKQFFIEFGGEGIGGLGGGAAIASEAGEKQLDSLQSIGESSGYESFKWRPADEDVSASSGNGTGSVVVGDHPGHDVTISESDVDGHNISSSLSNSSGRRESWRISHNTRNELLLTDLDFSEDLFAQGTVSLGPFLNAIWGKLQTFTSNSLYVNLHLTGLITRLAWYPLPLIHSLLLRSDIVITSDTPSFHQVLRILKQQIDAELPVTEDSLEIIDVARSSLIDREFRLVNARKGNENSPLHQQQSLQHPHHLQPLPAPQQTGAGAQQRSAYATLSAATPVQATPFSAYDPFKRSNNSRRSISKSITSMFSRKSTLPAPAIAPTPASSGLSQIYAFFTGAASTIMGNNNQQSSNQTHLNSSSSSAVTTCETSLSTQPHATGPGSAQLRTTSSTISTSSGTTAGSGGGGGSGSNSSFSIGGSTQTLSAHSNNTTNSSSTLHGGLDGIGPPTGSFNSEPVSLDSVGSSMGIIANTSGTERSRDLALCAVLLDEWLKELAAIAQEQSIVLVTDQWL</sequence>
<reference key="1">
    <citation type="journal article" date="2007" name="Nature">
        <title>Evolution of genes and genomes on the Drosophila phylogeny.</title>
        <authorList>
            <consortium name="Drosophila 12 genomes consortium"/>
        </authorList>
    </citation>
    <scope>NUCLEOTIDE SEQUENCE [LARGE SCALE GENOMIC DNA]</scope>
    <source>
        <strain>Tucson 14030-0811.24</strain>
    </source>
</reference>
<dbReference type="EMBL" id="CH963852">
    <property type="protein sequence ID" value="EDW75571.1"/>
    <property type="molecule type" value="Genomic_DNA"/>
</dbReference>
<dbReference type="SMR" id="B4MTY2"/>
<dbReference type="STRING" id="7260.B4MTY2"/>
<dbReference type="EnsemblMetazoa" id="FBtr0254397">
    <property type="protein sequence ID" value="FBpp0252889"/>
    <property type="gene ID" value="FBgn0225708"/>
</dbReference>
<dbReference type="EnsemblMetazoa" id="XM_002064549.4">
    <property type="protein sequence ID" value="XP_002064585.1"/>
    <property type="gene ID" value="LOC6641579"/>
</dbReference>
<dbReference type="GeneID" id="6641579"/>
<dbReference type="KEGG" id="dwi:6641579"/>
<dbReference type="eggNOG" id="KOG3695">
    <property type="taxonomic scope" value="Eukaryota"/>
</dbReference>
<dbReference type="HOGENOM" id="CLU_007807_0_0_1"/>
<dbReference type="OMA" id="RMPSLVQ"/>
<dbReference type="OrthoDB" id="6287422at2759"/>
<dbReference type="PhylomeDB" id="B4MTY2"/>
<dbReference type="Proteomes" id="UP000007798">
    <property type="component" value="Unassembled WGS sequence"/>
</dbReference>
<dbReference type="InterPro" id="IPR019384">
    <property type="entry name" value="FHIP"/>
</dbReference>
<dbReference type="InterPro" id="IPR045669">
    <property type="entry name" value="FHIP_C"/>
</dbReference>
<dbReference type="InterPro" id="IPR045668">
    <property type="entry name" value="FHIP_KELAA_motif"/>
</dbReference>
<dbReference type="PANTHER" id="PTHR21705:SF11">
    <property type="entry name" value="FHIP FAMILY PROTEIN CG3558"/>
    <property type="match status" value="1"/>
</dbReference>
<dbReference type="PANTHER" id="PTHR21705">
    <property type="entry name" value="RAI16 PROTEIN-RELATED"/>
    <property type="match status" value="1"/>
</dbReference>
<dbReference type="Pfam" id="PF19314">
    <property type="entry name" value="DUF5917"/>
    <property type="match status" value="1"/>
</dbReference>
<dbReference type="Pfam" id="PF19311">
    <property type="entry name" value="KELAA"/>
    <property type="match status" value="1"/>
</dbReference>
<dbReference type="Pfam" id="PF10257">
    <property type="entry name" value="RAI16-like"/>
    <property type="match status" value="1"/>
</dbReference>
<organism>
    <name type="scientific">Drosophila willistoni</name>
    <name type="common">Fruit fly</name>
    <dbReference type="NCBI Taxonomy" id="7260"/>
    <lineage>
        <taxon>Eukaryota</taxon>
        <taxon>Metazoa</taxon>
        <taxon>Ecdysozoa</taxon>
        <taxon>Arthropoda</taxon>
        <taxon>Hexapoda</taxon>
        <taxon>Insecta</taxon>
        <taxon>Pterygota</taxon>
        <taxon>Neoptera</taxon>
        <taxon>Endopterygota</taxon>
        <taxon>Diptera</taxon>
        <taxon>Brachycera</taxon>
        <taxon>Muscomorpha</taxon>
        <taxon>Ephydroidea</taxon>
        <taxon>Drosophilidae</taxon>
        <taxon>Drosophila</taxon>
        <taxon>Sophophora</taxon>
    </lineage>
</organism>